<gene>
    <name evidence="1" type="primary">FEN1</name>
    <name type="ORF">LinJ27.0180</name>
    <name type="ORF">LinJ_27_0260</name>
</gene>
<comment type="function">
    <text evidence="1">Structure-specific nuclease with 5'-flap endonuclease and 5'-3' exonuclease activities involved in DNA replication and repair. During DNA replication, cleaves the 5'-overhanging flap structure that is generated by displacement synthesis when DNA polymerase encounters the 5'-end of a downstream Okazaki fragment. It enters the flap from the 5'-end and then tracks to cleave the flap base, leaving a nick for ligation. Also involved in the long patch base excision repair (LP-BER) pathway, by cleaving within the apurinic/apyrimidinic (AP) site-terminated flap. Acts as a genome stabilization factor that prevents flaps from equilibrating into structures that lead to duplications and deletions. Also possesses 5'-3' exonuclease activity on nicked or gapped double-stranded DNA, and exhibits RNase H activity. Also involved in replication and repair of rDNA and in repairing mitochondrial DNA.</text>
</comment>
<comment type="cofactor">
    <cofactor evidence="1">
        <name>Mg(2+)</name>
        <dbReference type="ChEBI" id="CHEBI:18420"/>
    </cofactor>
    <text evidence="1">Binds 2 magnesium ions per subunit. They probably participate in the reaction catalyzed by the enzyme. May bind an additional third magnesium ion after substrate binding.</text>
</comment>
<comment type="subunit">
    <text evidence="1">Interacts with PCNA. Three molecules of FEN1 bind to one PCNA trimer with each molecule binding to one PCNA monomer. PCNA stimulates the nuclease activity without altering cleavage specificity.</text>
</comment>
<comment type="subcellular location">
    <subcellularLocation>
        <location evidence="1">Nucleus</location>
        <location evidence="1">Nucleolus</location>
    </subcellularLocation>
    <subcellularLocation>
        <location evidence="1">Nucleus</location>
        <location evidence="1">Nucleoplasm</location>
    </subcellularLocation>
    <subcellularLocation>
        <location evidence="1">Mitochondrion</location>
    </subcellularLocation>
    <text evidence="1">Resides mostly in the nucleoli and relocalizes to the nucleoplasm upon DNA damage.</text>
</comment>
<comment type="PTM">
    <text evidence="1">Phosphorylated. Phosphorylation upon DNA damage induces relocalization to the nuclear plasma.</text>
</comment>
<comment type="similarity">
    <text evidence="1">Belongs to the XPG/RAD2 endonuclease family. FEN1 subfamily.</text>
</comment>
<reference key="1">
    <citation type="journal article" date="2007" name="Nat. Genet.">
        <title>Comparative genomic analysis of three Leishmania species that cause diverse human disease.</title>
        <authorList>
            <person name="Peacock C.S."/>
            <person name="Seeger K."/>
            <person name="Harris D."/>
            <person name="Murphy L."/>
            <person name="Ruiz J.C."/>
            <person name="Quail M.A."/>
            <person name="Peters N."/>
            <person name="Adlem E."/>
            <person name="Tivey A."/>
            <person name="Aslett M."/>
            <person name="Kerhornou A."/>
            <person name="Ivens A."/>
            <person name="Fraser A."/>
            <person name="Rajandream M.-A."/>
            <person name="Carver T."/>
            <person name="Norbertczak H."/>
            <person name="Chillingworth T."/>
            <person name="Hance Z."/>
            <person name="Jagels K."/>
            <person name="Moule S."/>
            <person name="Ormond D."/>
            <person name="Rutter S."/>
            <person name="Sqaures R."/>
            <person name="Whitehead S."/>
            <person name="Rabbinowitsch E."/>
            <person name="Arrowsmith C."/>
            <person name="White B."/>
            <person name="Thurston S."/>
            <person name="Bringaud F."/>
            <person name="Baldauf S.L."/>
            <person name="Faulconbridge A."/>
            <person name="Jeffares D."/>
            <person name="Depledge D.P."/>
            <person name="Oyola S.O."/>
            <person name="Hilley J.D."/>
            <person name="Brito L.O."/>
            <person name="Tosi L.R.O."/>
            <person name="Barrell B."/>
            <person name="Cruz A.K."/>
            <person name="Mottram J.C."/>
            <person name="Smith D.F."/>
            <person name="Berriman M."/>
        </authorList>
    </citation>
    <scope>NUCLEOTIDE SEQUENCE [LARGE SCALE GENOMIC DNA]</scope>
    <source>
        <strain>JPCM5</strain>
    </source>
</reference>
<keyword id="KW-0227">DNA damage</keyword>
<keyword id="KW-0234">DNA repair</keyword>
<keyword id="KW-0235">DNA replication</keyword>
<keyword id="KW-0255">Endonuclease</keyword>
<keyword id="KW-0269">Exonuclease</keyword>
<keyword id="KW-0378">Hydrolase</keyword>
<keyword id="KW-0460">Magnesium</keyword>
<keyword id="KW-0479">Metal-binding</keyword>
<keyword id="KW-0496">Mitochondrion</keyword>
<keyword id="KW-0540">Nuclease</keyword>
<keyword id="KW-0539">Nucleus</keyword>
<keyword id="KW-0597">Phosphoprotein</keyword>
<keyword id="KW-1185">Reference proteome</keyword>
<organism>
    <name type="scientific">Leishmania infantum</name>
    <dbReference type="NCBI Taxonomy" id="5671"/>
    <lineage>
        <taxon>Eukaryota</taxon>
        <taxon>Discoba</taxon>
        <taxon>Euglenozoa</taxon>
        <taxon>Kinetoplastea</taxon>
        <taxon>Metakinetoplastina</taxon>
        <taxon>Trypanosomatida</taxon>
        <taxon>Trypanosomatidae</taxon>
        <taxon>Leishmaniinae</taxon>
        <taxon>Leishmania</taxon>
    </lineage>
</organism>
<protein>
    <recommendedName>
        <fullName evidence="1">Flap endonuclease 1</fullName>
        <shortName evidence="1">FEN-1</shortName>
        <ecNumber evidence="1">3.1.-.-</ecNumber>
    </recommendedName>
    <alternativeName>
        <fullName evidence="1">Flap structure-specific endonuclease 1</fullName>
    </alternativeName>
</protein>
<proteinExistence type="inferred from homology"/>
<name>FEN1_LEIIN</name>
<feature type="chain" id="PRO_0000403547" description="Flap endonuclease 1">
    <location>
        <begin position="1"/>
        <end position="395"/>
    </location>
</feature>
<feature type="region of interest" description="N-domain">
    <location>
        <begin position="1"/>
        <end position="108"/>
    </location>
</feature>
<feature type="region of interest" description="I-domain">
    <location>
        <begin position="126"/>
        <end position="257"/>
    </location>
</feature>
<feature type="region of interest" description="Interaction with PCNA" evidence="1">
    <location>
        <begin position="340"/>
        <end position="348"/>
    </location>
</feature>
<feature type="binding site" evidence="1">
    <location>
        <position position="34"/>
    </location>
    <ligand>
        <name>Mg(2+)</name>
        <dbReference type="ChEBI" id="CHEBI:18420"/>
        <label>1</label>
    </ligand>
</feature>
<feature type="binding site" evidence="1">
    <location>
        <position position="74"/>
    </location>
    <ligand>
        <name>DNA</name>
        <dbReference type="ChEBI" id="CHEBI:16991"/>
    </ligand>
</feature>
<feature type="binding site" evidence="1">
    <location>
        <position position="90"/>
    </location>
    <ligand>
        <name>Mg(2+)</name>
        <dbReference type="ChEBI" id="CHEBI:18420"/>
        <label>1</label>
    </ligand>
</feature>
<feature type="binding site" evidence="1">
    <location>
        <position position="162"/>
    </location>
    <ligand>
        <name>DNA</name>
        <dbReference type="ChEBI" id="CHEBI:16991"/>
    </ligand>
</feature>
<feature type="binding site" evidence="1">
    <location>
        <position position="162"/>
    </location>
    <ligand>
        <name>Mg(2+)</name>
        <dbReference type="ChEBI" id="CHEBI:18420"/>
        <label>1</label>
    </ligand>
</feature>
<feature type="binding site" evidence="1">
    <location>
        <position position="164"/>
    </location>
    <ligand>
        <name>Mg(2+)</name>
        <dbReference type="ChEBI" id="CHEBI:18420"/>
        <label>1</label>
    </ligand>
</feature>
<feature type="binding site" evidence="1">
    <location>
        <position position="183"/>
    </location>
    <ligand>
        <name>Mg(2+)</name>
        <dbReference type="ChEBI" id="CHEBI:18420"/>
        <label>2</label>
    </ligand>
</feature>
<feature type="binding site" evidence="1">
    <location>
        <position position="185"/>
    </location>
    <ligand>
        <name>Mg(2+)</name>
        <dbReference type="ChEBI" id="CHEBI:18420"/>
        <label>2</label>
    </ligand>
</feature>
<feature type="binding site" evidence="1">
    <location>
        <position position="235"/>
    </location>
    <ligand>
        <name>DNA</name>
        <dbReference type="ChEBI" id="CHEBI:16991"/>
    </ligand>
</feature>
<feature type="binding site" evidence="1">
    <location>
        <position position="237"/>
    </location>
    <ligand>
        <name>DNA</name>
        <dbReference type="ChEBI" id="CHEBI:16991"/>
    </ligand>
</feature>
<feature type="binding site" evidence="1">
    <location>
        <position position="237"/>
    </location>
    <ligand>
        <name>Mg(2+)</name>
        <dbReference type="ChEBI" id="CHEBI:18420"/>
        <label>2</label>
    </ligand>
</feature>
<sequence>MGILGLSKLLYDKSPNAIREQELKNFFGRRIAIDASMSIYQFIIAMKGFQDGQGLELTNEKGDVTSHLNGLFARTLRMIDEGIKPIYVFDGKPPKLKADELEMRRQKAAEAEREFEKAKDAGDDEMMEKMSKRTVRVSRDQIDESKKLLRLMGIPVIQAPSEAEAQCAELVKKGKAWAVGTEDMDALTFGSTVMLRHLNISDAKKRPIAEIHLDEVLQITGLSMGQFVDLCILLGCDYVPKVPGIGPQKAWEGIQRYGSIESFLESLDTTKHPVPADFYYKEARAFFQNPEVTPAEEINIQFSEPDEVGLIQFLVKEKLFNPDRVNKGIARLRAALTRKTQGRLDSFFTVTKVPQQTAAARAPLAGTKRPRDGKYVHVSGTLRKATSGHKKAVKK</sequence>
<dbReference type="EC" id="3.1.-.-" evidence="1"/>
<dbReference type="EMBL" id="FR796459">
    <property type="protein sequence ID" value="CAM69008.1"/>
    <property type="molecule type" value="Genomic_DNA"/>
</dbReference>
<dbReference type="RefSeq" id="XP_001466297.1">
    <property type="nucleotide sequence ID" value="XM_001466260.1"/>
</dbReference>
<dbReference type="SMR" id="A4I2L4"/>
<dbReference type="FunCoup" id="A4I2L4">
    <property type="interactions" value="551"/>
</dbReference>
<dbReference type="STRING" id="5671.A4I2L4"/>
<dbReference type="GeneID" id="5070003"/>
<dbReference type="KEGG" id="lif:LINJ_27_0260"/>
<dbReference type="VEuPathDB" id="TriTrypDB:LINF_270007600"/>
<dbReference type="eggNOG" id="KOG2519">
    <property type="taxonomic scope" value="Eukaryota"/>
</dbReference>
<dbReference type="InParanoid" id="A4I2L4"/>
<dbReference type="OMA" id="MGIPWVQ"/>
<dbReference type="Proteomes" id="UP000008153">
    <property type="component" value="Chromosome 27"/>
</dbReference>
<dbReference type="GO" id="GO:0005739">
    <property type="term" value="C:mitochondrion"/>
    <property type="evidence" value="ECO:0007669"/>
    <property type="project" value="UniProtKB-SubCell"/>
</dbReference>
<dbReference type="GO" id="GO:0005730">
    <property type="term" value="C:nucleolus"/>
    <property type="evidence" value="ECO:0007669"/>
    <property type="project" value="UniProtKB-SubCell"/>
</dbReference>
<dbReference type="GO" id="GO:0005654">
    <property type="term" value="C:nucleoplasm"/>
    <property type="evidence" value="ECO:0007669"/>
    <property type="project" value="UniProtKB-SubCell"/>
</dbReference>
<dbReference type="GO" id="GO:0008409">
    <property type="term" value="F:5'-3' exonuclease activity"/>
    <property type="evidence" value="ECO:0007669"/>
    <property type="project" value="UniProtKB-UniRule"/>
</dbReference>
<dbReference type="GO" id="GO:0017108">
    <property type="term" value="F:5'-flap endonuclease activity"/>
    <property type="evidence" value="ECO:0007669"/>
    <property type="project" value="UniProtKB-UniRule"/>
</dbReference>
<dbReference type="GO" id="GO:0003677">
    <property type="term" value="F:DNA binding"/>
    <property type="evidence" value="ECO:0007669"/>
    <property type="project" value="UniProtKB-UniRule"/>
</dbReference>
<dbReference type="GO" id="GO:0000287">
    <property type="term" value="F:magnesium ion binding"/>
    <property type="evidence" value="ECO:0007669"/>
    <property type="project" value="UniProtKB-UniRule"/>
</dbReference>
<dbReference type="GO" id="GO:0006284">
    <property type="term" value="P:base-excision repair"/>
    <property type="evidence" value="ECO:0007669"/>
    <property type="project" value="UniProtKB-UniRule"/>
</dbReference>
<dbReference type="GO" id="GO:0043137">
    <property type="term" value="P:DNA replication, removal of RNA primer"/>
    <property type="evidence" value="ECO:0007669"/>
    <property type="project" value="UniProtKB-UniRule"/>
</dbReference>
<dbReference type="CDD" id="cd09907">
    <property type="entry name" value="H3TH_FEN1-Euk"/>
    <property type="match status" value="1"/>
</dbReference>
<dbReference type="CDD" id="cd09867">
    <property type="entry name" value="PIN_FEN1"/>
    <property type="match status" value="1"/>
</dbReference>
<dbReference type="FunFam" id="1.10.150.20:FF:000009">
    <property type="entry name" value="Flap endonuclease 1"/>
    <property type="match status" value="1"/>
</dbReference>
<dbReference type="FunFam" id="3.40.50.1010:FF:000016">
    <property type="entry name" value="Flap endonuclease 1"/>
    <property type="match status" value="1"/>
</dbReference>
<dbReference type="Gene3D" id="1.10.150.20">
    <property type="entry name" value="5' to 3' exonuclease, C-terminal subdomain"/>
    <property type="match status" value="1"/>
</dbReference>
<dbReference type="Gene3D" id="3.40.50.1010">
    <property type="entry name" value="5'-nuclease"/>
    <property type="match status" value="1"/>
</dbReference>
<dbReference type="HAMAP" id="MF_00614">
    <property type="entry name" value="Fen"/>
    <property type="match status" value="1"/>
</dbReference>
<dbReference type="InterPro" id="IPR036279">
    <property type="entry name" value="5-3_exonuclease_C_sf"/>
</dbReference>
<dbReference type="InterPro" id="IPR023426">
    <property type="entry name" value="Flap_endonuc"/>
</dbReference>
<dbReference type="InterPro" id="IPR008918">
    <property type="entry name" value="HhH2"/>
</dbReference>
<dbReference type="InterPro" id="IPR029060">
    <property type="entry name" value="PIN-like_dom_sf"/>
</dbReference>
<dbReference type="InterPro" id="IPR006086">
    <property type="entry name" value="XPG-I_dom"/>
</dbReference>
<dbReference type="InterPro" id="IPR006084">
    <property type="entry name" value="XPG/Rad2"/>
</dbReference>
<dbReference type="InterPro" id="IPR019974">
    <property type="entry name" value="XPG_CS"/>
</dbReference>
<dbReference type="InterPro" id="IPR006085">
    <property type="entry name" value="XPG_DNA_repair_N"/>
</dbReference>
<dbReference type="PANTHER" id="PTHR11081:SF9">
    <property type="entry name" value="FLAP ENDONUCLEASE 1"/>
    <property type="match status" value="1"/>
</dbReference>
<dbReference type="PANTHER" id="PTHR11081">
    <property type="entry name" value="FLAP ENDONUCLEASE FAMILY MEMBER"/>
    <property type="match status" value="1"/>
</dbReference>
<dbReference type="Pfam" id="PF00867">
    <property type="entry name" value="XPG_I"/>
    <property type="match status" value="1"/>
</dbReference>
<dbReference type="Pfam" id="PF00752">
    <property type="entry name" value="XPG_N"/>
    <property type="match status" value="1"/>
</dbReference>
<dbReference type="PRINTS" id="PR00853">
    <property type="entry name" value="XPGRADSUPER"/>
</dbReference>
<dbReference type="SMART" id="SM00279">
    <property type="entry name" value="HhH2"/>
    <property type="match status" value="1"/>
</dbReference>
<dbReference type="SMART" id="SM00484">
    <property type="entry name" value="XPGI"/>
    <property type="match status" value="1"/>
</dbReference>
<dbReference type="SMART" id="SM00485">
    <property type="entry name" value="XPGN"/>
    <property type="match status" value="1"/>
</dbReference>
<dbReference type="SUPFAM" id="SSF47807">
    <property type="entry name" value="5' to 3' exonuclease, C-terminal subdomain"/>
    <property type="match status" value="1"/>
</dbReference>
<dbReference type="SUPFAM" id="SSF88723">
    <property type="entry name" value="PIN domain-like"/>
    <property type="match status" value="1"/>
</dbReference>
<dbReference type="PROSITE" id="PS00841">
    <property type="entry name" value="XPG_1"/>
    <property type="match status" value="1"/>
</dbReference>
<dbReference type="PROSITE" id="PS00842">
    <property type="entry name" value="XPG_2"/>
    <property type="match status" value="1"/>
</dbReference>
<accession>A4I2L4</accession>
<evidence type="ECO:0000255" key="1">
    <source>
        <dbReference type="HAMAP-Rule" id="MF_03140"/>
    </source>
</evidence>